<name>RUVC_MOOTA</name>
<dbReference type="EC" id="3.1.21.10" evidence="1"/>
<dbReference type="EMBL" id="CP000232">
    <property type="protein sequence ID" value="ABC20004.1"/>
    <property type="molecule type" value="Genomic_DNA"/>
</dbReference>
<dbReference type="RefSeq" id="YP_430547.1">
    <property type="nucleotide sequence ID" value="NC_007644.1"/>
</dbReference>
<dbReference type="SMR" id="Q2RHT5"/>
<dbReference type="STRING" id="264732.Moth_1702"/>
<dbReference type="EnsemblBacteria" id="ABC20004">
    <property type="protein sequence ID" value="ABC20004"/>
    <property type="gene ID" value="Moth_1702"/>
</dbReference>
<dbReference type="KEGG" id="mta:Moth_1702"/>
<dbReference type="PATRIC" id="fig|264732.11.peg.1843"/>
<dbReference type="eggNOG" id="COG0817">
    <property type="taxonomic scope" value="Bacteria"/>
</dbReference>
<dbReference type="HOGENOM" id="CLU_091257_3_1_9"/>
<dbReference type="OrthoDB" id="9805499at2"/>
<dbReference type="GO" id="GO:0005737">
    <property type="term" value="C:cytoplasm"/>
    <property type="evidence" value="ECO:0007669"/>
    <property type="project" value="UniProtKB-SubCell"/>
</dbReference>
<dbReference type="GO" id="GO:0048476">
    <property type="term" value="C:Holliday junction resolvase complex"/>
    <property type="evidence" value="ECO:0007669"/>
    <property type="project" value="UniProtKB-UniRule"/>
</dbReference>
<dbReference type="GO" id="GO:0008821">
    <property type="term" value="F:crossover junction DNA endonuclease activity"/>
    <property type="evidence" value="ECO:0007669"/>
    <property type="project" value="UniProtKB-UniRule"/>
</dbReference>
<dbReference type="GO" id="GO:0003677">
    <property type="term" value="F:DNA binding"/>
    <property type="evidence" value="ECO:0007669"/>
    <property type="project" value="UniProtKB-KW"/>
</dbReference>
<dbReference type="GO" id="GO:0000287">
    <property type="term" value="F:magnesium ion binding"/>
    <property type="evidence" value="ECO:0007669"/>
    <property type="project" value="UniProtKB-UniRule"/>
</dbReference>
<dbReference type="GO" id="GO:0006310">
    <property type="term" value="P:DNA recombination"/>
    <property type="evidence" value="ECO:0007669"/>
    <property type="project" value="UniProtKB-UniRule"/>
</dbReference>
<dbReference type="GO" id="GO:0006281">
    <property type="term" value="P:DNA repair"/>
    <property type="evidence" value="ECO:0007669"/>
    <property type="project" value="UniProtKB-UniRule"/>
</dbReference>
<dbReference type="CDD" id="cd16962">
    <property type="entry name" value="RuvC"/>
    <property type="match status" value="1"/>
</dbReference>
<dbReference type="FunFam" id="3.30.420.10:FF:000002">
    <property type="entry name" value="Crossover junction endodeoxyribonuclease RuvC"/>
    <property type="match status" value="1"/>
</dbReference>
<dbReference type="Gene3D" id="3.30.420.10">
    <property type="entry name" value="Ribonuclease H-like superfamily/Ribonuclease H"/>
    <property type="match status" value="1"/>
</dbReference>
<dbReference type="HAMAP" id="MF_00034">
    <property type="entry name" value="RuvC"/>
    <property type="match status" value="1"/>
</dbReference>
<dbReference type="InterPro" id="IPR012337">
    <property type="entry name" value="RNaseH-like_sf"/>
</dbReference>
<dbReference type="InterPro" id="IPR036397">
    <property type="entry name" value="RNaseH_sf"/>
</dbReference>
<dbReference type="InterPro" id="IPR020563">
    <property type="entry name" value="X-over_junc_endoDNase_Mg_BS"/>
</dbReference>
<dbReference type="InterPro" id="IPR002176">
    <property type="entry name" value="X-over_junc_endoDNase_RuvC"/>
</dbReference>
<dbReference type="NCBIfam" id="NF000711">
    <property type="entry name" value="PRK00039.2-1"/>
    <property type="match status" value="1"/>
</dbReference>
<dbReference type="NCBIfam" id="TIGR00228">
    <property type="entry name" value="ruvC"/>
    <property type="match status" value="1"/>
</dbReference>
<dbReference type="PANTHER" id="PTHR30194">
    <property type="entry name" value="CROSSOVER JUNCTION ENDODEOXYRIBONUCLEASE RUVC"/>
    <property type="match status" value="1"/>
</dbReference>
<dbReference type="PANTHER" id="PTHR30194:SF3">
    <property type="entry name" value="CROSSOVER JUNCTION ENDODEOXYRIBONUCLEASE RUVC"/>
    <property type="match status" value="1"/>
</dbReference>
<dbReference type="Pfam" id="PF02075">
    <property type="entry name" value="RuvC"/>
    <property type="match status" value="1"/>
</dbReference>
<dbReference type="PRINTS" id="PR00696">
    <property type="entry name" value="RSOLVASERUVC"/>
</dbReference>
<dbReference type="SUPFAM" id="SSF53098">
    <property type="entry name" value="Ribonuclease H-like"/>
    <property type="match status" value="1"/>
</dbReference>
<dbReference type="PROSITE" id="PS01321">
    <property type="entry name" value="RUVC"/>
    <property type="match status" value="1"/>
</dbReference>
<accession>Q2RHT5</accession>
<gene>
    <name evidence="1" type="primary">ruvC</name>
    <name type="ordered locus">Moth_1702</name>
</gene>
<organism>
    <name type="scientific">Moorella thermoacetica (strain ATCC 39073 / JCM 9320)</name>
    <dbReference type="NCBI Taxonomy" id="264732"/>
    <lineage>
        <taxon>Bacteria</taxon>
        <taxon>Bacillati</taxon>
        <taxon>Bacillota</taxon>
        <taxon>Clostridia</taxon>
        <taxon>Moorellales</taxon>
        <taxon>Moorellaceae</taxon>
        <taxon>Moorella</taxon>
    </lineage>
</organism>
<keyword id="KW-0963">Cytoplasm</keyword>
<keyword id="KW-0227">DNA damage</keyword>
<keyword id="KW-0233">DNA recombination</keyword>
<keyword id="KW-0234">DNA repair</keyword>
<keyword id="KW-0238">DNA-binding</keyword>
<keyword id="KW-0255">Endonuclease</keyword>
<keyword id="KW-0378">Hydrolase</keyword>
<keyword id="KW-0460">Magnesium</keyword>
<keyword id="KW-0479">Metal-binding</keyword>
<keyword id="KW-0540">Nuclease</keyword>
<reference key="1">
    <citation type="journal article" date="2008" name="Environ. Microbiol.">
        <title>The complete genome sequence of Moorella thermoacetica (f. Clostridium thermoaceticum).</title>
        <authorList>
            <person name="Pierce E."/>
            <person name="Xie G."/>
            <person name="Barabote R.D."/>
            <person name="Saunders E."/>
            <person name="Han C.S."/>
            <person name="Detter J.C."/>
            <person name="Richardson P."/>
            <person name="Brettin T.S."/>
            <person name="Das A."/>
            <person name="Ljungdahl L.G."/>
            <person name="Ragsdale S.W."/>
        </authorList>
    </citation>
    <scope>NUCLEOTIDE SEQUENCE [LARGE SCALE GENOMIC DNA]</scope>
    <source>
        <strain>ATCC 39073 / JCM 9320</strain>
    </source>
</reference>
<feature type="chain" id="PRO_1000002776" description="Crossover junction endodeoxyribonuclease RuvC">
    <location>
        <begin position="1"/>
        <end position="167"/>
    </location>
</feature>
<feature type="active site" evidence="1">
    <location>
        <position position="7"/>
    </location>
</feature>
<feature type="active site" evidence="1">
    <location>
        <position position="67"/>
    </location>
</feature>
<feature type="active site" evidence="1">
    <location>
        <position position="140"/>
    </location>
</feature>
<feature type="binding site" evidence="1">
    <location>
        <position position="7"/>
    </location>
    <ligand>
        <name>Mg(2+)</name>
        <dbReference type="ChEBI" id="CHEBI:18420"/>
        <label>1</label>
    </ligand>
</feature>
<feature type="binding site" evidence="1">
    <location>
        <position position="67"/>
    </location>
    <ligand>
        <name>Mg(2+)</name>
        <dbReference type="ChEBI" id="CHEBI:18420"/>
        <label>2</label>
    </ligand>
</feature>
<feature type="binding site" evidence="1">
    <location>
        <position position="140"/>
    </location>
    <ligand>
        <name>Mg(2+)</name>
        <dbReference type="ChEBI" id="CHEBI:18420"/>
        <label>1</label>
    </ligand>
</feature>
<proteinExistence type="inferred from homology"/>
<evidence type="ECO:0000255" key="1">
    <source>
        <dbReference type="HAMAP-Rule" id="MF_00034"/>
    </source>
</evidence>
<sequence>MLILGIDPGTAIVGYGLVEARAGQTRALVYDCIRTPAGEDPCRRLATIYAGIRELIERLQPETMAVEELFFNKNSKTALAVGQARGVILLAAAHTGLPVAEYTPLEVKQAVAGFGRAPKEQVQRMVQALLGLEEKPRPDDVADALAVAVCHASFAPWRQREKEVAGR</sequence>
<comment type="function">
    <text evidence="1">The RuvA-RuvB-RuvC complex processes Holliday junction (HJ) DNA during genetic recombination and DNA repair. Endonuclease that resolves HJ intermediates. Cleaves cruciform DNA by making single-stranded nicks across the HJ at symmetrical positions within the homologous arms, yielding a 5'-phosphate and a 3'-hydroxyl group; requires a central core of homology in the junction. The consensus cleavage sequence is 5'-(A/T)TT(C/G)-3'. Cleavage occurs on the 3'-side of the TT dinucleotide at the point of strand exchange. HJ branch migration catalyzed by RuvA-RuvB allows RuvC to scan DNA until it finds its consensus sequence, where it cleaves and resolves the cruciform DNA.</text>
</comment>
<comment type="catalytic activity">
    <reaction evidence="1">
        <text>Endonucleolytic cleavage at a junction such as a reciprocal single-stranded crossover between two homologous DNA duplexes (Holliday junction).</text>
        <dbReference type="EC" id="3.1.21.10"/>
    </reaction>
</comment>
<comment type="cofactor">
    <cofactor evidence="1">
        <name>Mg(2+)</name>
        <dbReference type="ChEBI" id="CHEBI:18420"/>
    </cofactor>
    <text evidence="1">Binds 2 Mg(2+) ion per subunit.</text>
</comment>
<comment type="subunit">
    <text evidence="1">Homodimer which binds Holliday junction (HJ) DNA. The HJ becomes 2-fold symmetrical on binding to RuvC with unstacked arms; it has a different conformation from HJ DNA in complex with RuvA. In the full resolvosome a probable DNA-RuvA(4)-RuvB(12)-RuvC(2) complex forms which resolves the HJ.</text>
</comment>
<comment type="subcellular location">
    <subcellularLocation>
        <location evidence="1">Cytoplasm</location>
    </subcellularLocation>
</comment>
<comment type="similarity">
    <text evidence="1">Belongs to the RuvC family.</text>
</comment>
<protein>
    <recommendedName>
        <fullName evidence="1">Crossover junction endodeoxyribonuclease RuvC</fullName>
        <ecNumber evidence="1">3.1.21.10</ecNumber>
    </recommendedName>
    <alternativeName>
        <fullName evidence="1">Holliday junction nuclease RuvC</fullName>
    </alternativeName>
    <alternativeName>
        <fullName evidence="1">Holliday junction resolvase RuvC</fullName>
    </alternativeName>
</protein>